<gene>
    <name type="ordered locus">Cyan7425_1778</name>
</gene>
<keyword id="KW-0378">Hydrolase</keyword>
<keyword id="KW-0479">Metal-binding</keyword>
<keyword id="KW-0482">Metalloprotease</keyword>
<keyword id="KW-0645">Protease</keyword>
<keyword id="KW-0862">Zinc</keyword>
<comment type="similarity">
    <text evidence="2">Belongs to the UPF0758 family.</text>
</comment>
<sequence length="243" mass="26431">MTYHLRVADLPSSDRPREKLLAQGARYLTSAELIAILLGTGQGAGKLSAIGLGQYILQQLGQHQRDPLAVLREITPQELMAIPGIGPAKATTILAAIELGKRVFQSKPTEQTIINDPAVAAAALGSELFWQAQEKFAVLLLDVRHRLIGTQVITIGTATETIAHPRDIFREVIRQGATRVIVAHNHPSGNVEPSPEDLALTQQLLSGAKFLDIPLLDHLILGNGNFRSLRQTTKLWEECPQGD</sequence>
<accession>B8HRF8</accession>
<name>Y1778_CYAP4</name>
<evidence type="ECO:0000255" key="1">
    <source>
        <dbReference type="PROSITE-ProRule" id="PRU01182"/>
    </source>
</evidence>
<evidence type="ECO:0000305" key="2"/>
<protein>
    <recommendedName>
        <fullName>UPF0758 protein Cyan7425_1778</fullName>
    </recommendedName>
</protein>
<feature type="chain" id="PRO_1000195292" description="UPF0758 protein Cyan7425_1778">
    <location>
        <begin position="1"/>
        <end position="243"/>
    </location>
</feature>
<feature type="domain" description="MPN" evidence="1">
    <location>
        <begin position="112"/>
        <end position="235"/>
    </location>
</feature>
<feature type="short sequence motif" description="JAMM motif" evidence="1">
    <location>
        <begin position="184"/>
        <end position="197"/>
    </location>
</feature>
<feature type="binding site" evidence="1">
    <location>
        <position position="184"/>
    </location>
    <ligand>
        <name>Zn(2+)</name>
        <dbReference type="ChEBI" id="CHEBI:29105"/>
        <note>catalytic</note>
    </ligand>
</feature>
<feature type="binding site" evidence="1">
    <location>
        <position position="186"/>
    </location>
    <ligand>
        <name>Zn(2+)</name>
        <dbReference type="ChEBI" id="CHEBI:29105"/>
        <note>catalytic</note>
    </ligand>
</feature>
<feature type="binding site" evidence="1">
    <location>
        <position position="197"/>
    </location>
    <ligand>
        <name>Zn(2+)</name>
        <dbReference type="ChEBI" id="CHEBI:29105"/>
        <note>catalytic</note>
    </ligand>
</feature>
<proteinExistence type="inferred from homology"/>
<organism>
    <name type="scientific">Cyanothece sp. (strain PCC 7425 / ATCC 29141)</name>
    <dbReference type="NCBI Taxonomy" id="395961"/>
    <lineage>
        <taxon>Bacteria</taxon>
        <taxon>Bacillati</taxon>
        <taxon>Cyanobacteriota</taxon>
        <taxon>Cyanophyceae</taxon>
        <taxon>Gomontiellales</taxon>
        <taxon>Cyanothecaceae</taxon>
        <taxon>Cyanothece</taxon>
    </lineage>
</organism>
<dbReference type="EMBL" id="CP001344">
    <property type="protein sequence ID" value="ACL44146.1"/>
    <property type="molecule type" value="Genomic_DNA"/>
</dbReference>
<dbReference type="SMR" id="B8HRF8"/>
<dbReference type="STRING" id="395961.Cyan7425_1778"/>
<dbReference type="KEGG" id="cyn:Cyan7425_1778"/>
<dbReference type="eggNOG" id="COG2003">
    <property type="taxonomic scope" value="Bacteria"/>
</dbReference>
<dbReference type="HOGENOM" id="CLU_073529_0_2_3"/>
<dbReference type="OrthoDB" id="9804482at2"/>
<dbReference type="GO" id="GO:0046872">
    <property type="term" value="F:metal ion binding"/>
    <property type="evidence" value="ECO:0007669"/>
    <property type="project" value="UniProtKB-KW"/>
</dbReference>
<dbReference type="GO" id="GO:0008237">
    <property type="term" value="F:metallopeptidase activity"/>
    <property type="evidence" value="ECO:0007669"/>
    <property type="project" value="UniProtKB-KW"/>
</dbReference>
<dbReference type="GO" id="GO:0006508">
    <property type="term" value="P:proteolysis"/>
    <property type="evidence" value="ECO:0007669"/>
    <property type="project" value="UniProtKB-KW"/>
</dbReference>
<dbReference type="CDD" id="cd08071">
    <property type="entry name" value="MPN_DUF2466"/>
    <property type="match status" value="1"/>
</dbReference>
<dbReference type="Gene3D" id="3.40.140.10">
    <property type="entry name" value="Cytidine Deaminase, domain 2"/>
    <property type="match status" value="1"/>
</dbReference>
<dbReference type="InterPro" id="IPR037518">
    <property type="entry name" value="MPN"/>
</dbReference>
<dbReference type="InterPro" id="IPR025657">
    <property type="entry name" value="RadC_JAB"/>
</dbReference>
<dbReference type="InterPro" id="IPR001405">
    <property type="entry name" value="UPF0758"/>
</dbReference>
<dbReference type="InterPro" id="IPR020891">
    <property type="entry name" value="UPF0758_CS"/>
</dbReference>
<dbReference type="InterPro" id="IPR046778">
    <property type="entry name" value="UPF0758_N"/>
</dbReference>
<dbReference type="NCBIfam" id="NF000642">
    <property type="entry name" value="PRK00024.1"/>
    <property type="match status" value="1"/>
</dbReference>
<dbReference type="NCBIfam" id="TIGR00608">
    <property type="entry name" value="radc"/>
    <property type="match status" value="1"/>
</dbReference>
<dbReference type="PANTHER" id="PTHR30471">
    <property type="entry name" value="DNA REPAIR PROTEIN RADC"/>
    <property type="match status" value="1"/>
</dbReference>
<dbReference type="PANTHER" id="PTHR30471:SF3">
    <property type="entry name" value="UPF0758 PROTEIN YEES-RELATED"/>
    <property type="match status" value="1"/>
</dbReference>
<dbReference type="Pfam" id="PF04002">
    <property type="entry name" value="RadC"/>
    <property type="match status" value="1"/>
</dbReference>
<dbReference type="Pfam" id="PF20582">
    <property type="entry name" value="UPF0758_N"/>
    <property type="match status" value="1"/>
</dbReference>
<dbReference type="SUPFAM" id="SSF102712">
    <property type="entry name" value="JAB1/MPN domain"/>
    <property type="match status" value="1"/>
</dbReference>
<dbReference type="PROSITE" id="PS50249">
    <property type="entry name" value="MPN"/>
    <property type="match status" value="1"/>
</dbReference>
<dbReference type="PROSITE" id="PS01302">
    <property type="entry name" value="UPF0758"/>
    <property type="match status" value="1"/>
</dbReference>
<reference key="1">
    <citation type="journal article" date="2011" name="MBio">
        <title>Novel metabolic attributes of the genus Cyanothece, comprising a group of unicellular nitrogen-fixing Cyanobacteria.</title>
        <authorList>
            <person name="Bandyopadhyay A."/>
            <person name="Elvitigala T."/>
            <person name="Welsh E."/>
            <person name="Stockel J."/>
            <person name="Liberton M."/>
            <person name="Min H."/>
            <person name="Sherman L.A."/>
            <person name="Pakrasi H.B."/>
        </authorList>
    </citation>
    <scope>NUCLEOTIDE SEQUENCE [LARGE SCALE GENOMIC DNA]</scope>
    <source>
        <strain>PCC 7425 / ATCC 29141</strain>
    </source>
</reference>